<reference key="1">
    <citation type="submission" date="1997-07" db="EMBL/GenBank/DDBJ databases">
        <title>Sequence analysis of the 70kb region between 17 and 23 degree of the Bacillus subtilis chromosome.</title>
        <authorList>
            <person name="Haga K."/>
            <person name="Liu H."/>
            <person name="Yasumoto K."/>
            <person name="Takahashi H."/>
            <person name="Yoshikawa H."/>
        </authorList>
    </citation>
    <scope>NUCLEOTIDE SEQUENCE [GENOMIC DNA]</scope>
    <source>
        <strain>168</strain>
    </source>
</reference>
<reference key="2">
    <citation type="journal article" date="1997" name="Nature">
        <title>The complete genome sequence of the Gram-positive bacterium Bacillus subtilis.</title>
        <authorList>
            <person name="Kunst F."/>
            <person name="Ogasawara N."/>
            <person name="Moszer I."/>
            <person name="Albertini A.M."/>
            <person name="Alloni G."/>
            <person name="Azevedo V."/>
            <person name="Bertero M.G."/>
            <person name="Bessieres P."/>
            <person name="Bolotin A."/>
            <person name="Borchert S."/>
            <person name="Borriss R."/>
            <person name="Boursier L."/>
            <person name="Brans A."/>
            <person name="Braun M."/>
            <person name="Brignell S.C."/>
            <person name="Bron S."/>
            <person name="Brouillet S."/>
            <person name="Bruschi C.V."/>
            <person name="Caldwell B."/>
            <person name="Capuano V."/>
            <person name="Carter N.M."/>
            <person name="Choi S.-K."/>
            <person name="Codani J.-J."/>
            <person name="Connerton I.F."/>
            <person name="Cummings N.J."/>
            <person name="Daniel R.A."/>
            <person name="Denizot F."/>
            <person name="Devine K.M."/>
            <person name="Duesterhoeft A."/>
            <person name="Ehrlich S.D."/>
            <person name="Emmerson P.T."/>
            <person name="Entian K.-D."/>
            <person name="Errington J."/>
            <person name="Fabret C."/>
            <person name="Ferrari E."/>
            <person name="Foulger D."/>
            <person name="Fritz C."/>
            <person name="Fujita M."/>
            <person name="Fujita Y."/>
            <person name="Fuma S."/>
            <person name="Galizzi A."/>
            <person name="Galleron N."/>
            <person name="Ghim S.-Y."/>
            <person name="Glaser P."/>
            <person name="Goffeau A."/>
            <person name="Golightly E.J."/>
            <person name="Grandi G."/>
            <person name="Guiseppi G."/>
            <person name="Guy B.J."/>
            <person name="Haga K."/>
            <person name="Haiech J."/>
            <person name="Harwood C.R."/>
            <person name="Henaut A."/>
            <person name="Hilbert H."/>
            <person name="Holsappel S."/>
            <person name="Hosono S."/>
            <person name="Hullo M.-F."/>
            <person name="Itaya M."/>
            <person name="Jones L.-M."/>
            <person name="Joris B."/>
            <person name="Karamata D."/>
            <person name="Kasahara Y."/>
            <person name="Klaerr-Blanchard M."/>
            <person name="Klein C."/>
            <person name="Kobayashi Y."/>
            <person name="Koetter P."/>
            <person name="Koningstein G."/>
            <person name="Krogh S."/>
            <person name="Kumano M."/>
            <person name="Kurita K."/>
            <person name="Lapidus A."/>
            <person name="Lardinois S."/>
            <person name="Lauber J."/>
            <person name="Lazarevic V."/>
            <person name="Lee S.-M."/>
            <person name="Levine A."/>
            <person name="Liu H."/>
            <person name="Masuda S."/>
            <person name="Mauel C."/>
            <person name="Medigue C."/>
            <person name="Medina N."/>
            <person name="Mellado R.P."/>
            <person name="Mizuno M."/>
            <person name="Moestl D."/>
            <person name="Nakai S."/>
            <person name="Noback M."/>
            <person name="Noone D."/>
            <person name="O'Reilly M."/>
            <person name="Ogawa K."/>
            <person name="Ogiwara A."/>
            <person name="Oudega B."/>
            <person name="Park S.-H."/>
            <person name="Parro V."/>
            <person name="Pohl T.M."/>
            <person name="Portetelle D."/>
            <person name="Porwollik S."/>
            <person name="Prescott A.M."/>
            <person name="Presecan E."/>
            <person name="Pujic P."/>
            <person name="Purnelle B."/>
            <person name="Rapoport G."/>
            <person name="Rey M."/>
            <person name="Reynolds S."/>
            <person name="Rieger M."/>
            <person name="Rivolta C."/>
            <person name="Rocha E."/>
            <person name="Roche B."/>
            <person name="Rose M."/>
            <person name="Sadaie Y."/>
            <person name="Sato T."/>
            <person name="Scanlan E."/>
            <person name="Schleich S."/>
            <person name="Schroeter R."/>
            <person name="Scoffone F."/>
            <person name="Sekiguchi J."/>
            <person name="Sekowska A."/>
            <person name="Seror S.J."/>
            <person name="Serror P."/>
            <person name="Shin B.-S."/>
            <person name="Soldo B."/>
            <person name="Sorokin A."/>
            <person name="Tacconi E."/>
            <person name="Takagi T."/>
            <person name="Takahashi H."/>
            <person name="Takemaru K."/>
            <person name="Takeuchi M."/>
            <person name="Tamakoshi A."/>
            <person name="Tanaka T."/>
            <person name="Terpstra P."/>
            <person name="Tognoni A."/>
            <person name="Tosato V."/>
            <person name="Uchiyama S."/>
            <person name="Vandenbol M."/>
            <person name="Vannier F."/>
            <person name="Vassarotti A."/>
            <person name="Viari A."/>
            <person name="Wambutt R."/>
            <person name="Wedler E."/>
            <person name="Wedler H."/>
            <person name="Weitzenegger T."/>
            <person name="Winters P."/>
            <person name="Wipat A."/>
            <person name="Yamamoto H."/>
            <person name="Yamane K."/>
            <person name="Yasumoto K."/>
            <person name="Yata K."/>
            <person name="Yoshida K."/>
            <person name="Yoshikawa H.-F."/>
            <person name="Zumstein E."/>
            <person name="Yoshikawa H."/>
            <person name="Danchin A."/>
        </authorList>
    </citation>
    <scope>NUCLEOTIDE SEQUENCE [LARGE SCALE GENOMIC DNA]</scope>
    <source>
        <strain>168</strain>
    </source>
</reference>
<reference key="3">
    <citation type="journal article" date="2009" name="Microbiology">
        <title>From a consortium sequence to a unified sequence: the Bacillus subtilis 168 reference genome a decade later.</title>
        <authorList>
            <person name="Barbe V."/>
            <person name="Cruveiller S."/>
            <person name="Kunst F."/>
            <person name="Lenoble P."/>
            <person name="Meurice G."/>
            <person name="Sekowska A."/>
            <person name="Vallenet D."/>
            <person name="Wang T."/>
            <person name="Moszer I."/>
            <person name="Medigue C."/>
            <person name="Danchin A."/>
        </authorList>
    </citation>
    <scope>SEQUENCE REVISION TO 4; 47 AND 130</scope>
</reference>
<reference key="4">
    <citation type="journal article" date="2003" name="Science">
        <title>Cannibalism by sporulating bacteria.</title>
        <authorList>
            <person name="Gonzalez-Pastor J.E."/>
            <person name="Hobbs E.C."/>
            <person name="Losick R."/>
        </authorList>
    </citation>
    <scope>FUNCTION IN SYNTHESIS OF SKFA</scope>
    <scope>INDUCTION</scope>
    <scope>DISRUPTION PHENOTYPE</scope>
    <source>
        <strain>168 / PY79</strain>
    </source>
</reference>
<reference key="5">
    <citation type="journal article" date="2007" name="J. Bacteriol.">
        <title>Abh and AbrB control of Bacillus subtilis antimicrobial gene expression.</title>
        <authorList>
            <person name="Strauch M.A."/>
            <person name="Bobay B.G."/>
            <person name="Cavanagh J."/>
            <person name="Yao F."/>
            <person name="Wilson A."/>
            <person name="Le Breton Y."/>
        </authorList>
    </citation>
    <scope>REPRESSION BY ABRB AND ABH</scope>
</reference>
<keyword id="KW-0045">Antibiotic biosynthesis</keyword>
<keyword id="KW-0871">Bacteriocin biosynthesis</keyword>
<keyword id="KW-1015">Disulfide bond</keyword>
<keyword id="KW-0676">Redox-active center</keyword>
<keyword id="KW-1185">Reference proteome</keyword>
<comment type="function">
    <text evidence="2">Required for production of the bacteriocin SkfA.</text>
</comment>
<comment type="induction">
    <text evidence="2 3">By Spo0A (PubMed:12817086) and PhoP, during nutrient starvation, especially phosphate starvation. Repressed by AbrB during normal growth when nutrients are plentiful, in association with the transcriptional repressor Abh.</text>
</comment>
<comment type="disruption phenotype">
    <text evidence="2">When the skfA-skfB-skfC-skfE-skfF-skfG-skfH operon is deleted, increased rate of spore formation; a double operon deletion (sdpA-sdpC plus skfA-skfH) makes spores even faster (PubMed:12817086).</text>
</comment>
<comment type="miscellaneous">
    <text evidence="2">Accelerated cannibalism by skf- cells is seen on solid media but not in liquid media.</text>
</comment>
<sequence length="141" mass="16230">MKDEQMLTEWPSHLPWLNQSQNDFTFPSDTYLLLYFWSMSCPNCHQLTDKVLQDIKDMNVKVIGVHVPYIEEEKSMEVVLTYALDRGLAIPIVLDQNYEIVTTCHVQGIPSFCLLSQYGQIITKTMGDVGWDKMLKKIAGL</sequence>
<gene>
    <name evidence="4" type="primary">skfH</name>
    <name type="synonym">ybdE</name>
    <name type="ordered locus">BSU01980</name>
</gene>
<proteinExistence type="evidence at protein level"/>
<organism>
    <name type="scientific">Bacillus subtilis (strain 168)</name>
    <dbReference type="NCBI Taxonomy" id="224308"/>
    <lineage>
        <taxon>Bacteria</taxon>
        <taxon>Bacillati</taxon>
        <taxon>Bacillota</taxon>
        <taxon>Bacilli</taxon>
        <taxon>Bacillales</taxon>
        <taxon>Bacillaceae</taxon>
        <taxon>Bacillus</taxon>
    </lineage>
</organism>
<feature type="chain" id="PRO_0000312743" description="Thioredoxin-like protein SkfH">
    <location>
        <begin position="1"/>
        <end position="141"/>
    </location>
</feature>
<feature type="domain" description="Thioredoxin">
    <location>
        <begin position="2"/>
        <end position="141"/>
    </location>
</feature>
<feature type="disulfide bond" description="Redox-active" evidence="1">
    <location>
        <begin position="41"/>
        <end position="44"/>
    </location>
</feature>
<feature type="sequence conflict" description="In Ref. 1; BAA33095." evidence="5" ref="1">
    <original>E</original>
    <variation>G</variation>
    <location>
        <position position="4"/>
    </location>
</feature>
<feature type="sequence conflict" description="In Ref. 1; BAA33095." evidence="5" ref="1">
    <original>L</original>
    <variation>F</variation>
    <location>
        <position position="47"/>
    </location>
</feature>
<feature type="sequence conflict" description="In Ref. 1; BAA33095." evidence="5" ref="1">
    <original>G</original>
    <variation>S</variation>
    <location>
        <position position="130"/>
    </location>
</feature>
<accession>O31430</accession>
<accession>Q7DL59</accession>
<protein>
    <recommendedName>
        <fullName>Thioredoxin-like protein SkfH</fullName>
    </recommendedName>
</protein>
<name>SKFH_BACSU</name>
<evidence type="ECO:0000250" key="1"/>
<evidence type="ECO:0000269" key="2">
    <source>
    </source>
</evidence>
<evidence type="ECO:0000269" key="3">
    <source>
    </source>
</evidence>
<evidence type="ECO:0000303" key="4">
    <source>
    </source>
</evidence>
<evidence type="ECO:0000305" key="5"/>
<dbReference type="EMBL" id="AB006424">
    <property type="protein sequence ID" value="BAA33095.1"/>
    <property type="molecule type" value="Genomic_DNA"/>
</dbReference>
<dbReference type="EMBL" id="AL009126">
    <property type="protein sequence ID" value="CAB11992.2"/>
    <property type="molecule type" value="Genomic_DNA"/>
</dbReference>
<dbReference type="PIR" id="C69747">
    <property type="entry name" value="C69747"/>
</dbReference>
<dbReference type="RefSeq" id="NP_388080.2">
    <property type="nucleotide sequence ID" value="NC_000964.3"/>
</dbReference>
<dbReference type="RefSeq" id="WP_003246390.1">
    <property type="nucleotide sequence ID" value="NZ_OZ025638.1"/>
</dbReference>
<dbReference type="SMR" id="O31430"/>
<dbReference type="FunCoup" id="O31430">
    <property type="interactions" value="81"/>
</dbReference>
<dbReference type="STRING" id="224308.BSU01980"/>
<dbReference type="PaxDb" id="224308-BSU01980"/>
<dbReference type="EnsemblBacteria" id="CAB11992">
    <property type="protein sequence ID" value="CAB11992"/>
    <property type="gene ID" value="BSU_01980"/>
</dbReference>
<dbReference type="GeneID" id="938499"/>
<dbReference type="KEGG" id="bsu:BSU01980"/>
<dbReference type="PATRIC" id="fig|224308.179.peg.204"/>
<dbReference type="eggNOG" id="COG0526">
    <property type="taxonomic scope" value="Bacteria"/>
</dbReference>
<dbReference type="InParanoid" id="O31430"/>
<dbReference type="OrthoDB" id="2909932at2"/>
<dbReference type="PhylomeDB" id="O31430"/>
<dbReference type="BioCyc" id="BSUB:BSU01980-MONOMER"/>
<dbReference type="Proteomes" id="UP000001570">
    <property type="component" value="Chromosome"/>
</dbReference>
<dbReference type="GO" id="GO:0030152">
    <property type="term" value="P:bacteriocin biosynthetic process"/>
    <property type="evidence" value="ECO:0007669"/>
    <property type="project" value="UniProtKB-KW"/>
</dbReference>
<dbReference type="CDD" id="cd02966">
    <property type="entry name" value="TlpA_like_family"/>
    <property type="match status" value="1"/>
</dbReference>
<dbReference type="Gene3D" id="3.40.30.10">
    <property type="entry name" value="Glutaredoxin"/>
    <property type="match status" value="1"/>
</dbReference>
<dbReference type="InterPro" id="IPR012336">
    <property type="entry name" value="Thioredoxin-like_fold"/>
</dbReference>
<dbReference type="InterPro" id="IPR036249">
    <property type="entry name" value="Thioredoxin-like_sf"/>
</dbReference>
<dbReference type="InterPro" id="IPR050553">
    <property type="entry name" value="Thioredoxin_ResA/DsbE_sf"/>
</dbReference>
<dbReference type="PANTHER" id="PTHR42852:SF13">
    <property type="entry name" value="PROTEIN DIPZ"/>
    <property type="match status" value="1"/>
</dbReference>
<dbReference type="PANTHER" id="PTHR42852">
    <property type="entry name" value="THIOL:DISULFIDE INTERCHANGE PROTEIN DSBE"/>
    <property type="match status" value="1"/>
</dbReference>
<dbReference type="Pfam" id="PF13905">
    <property type="entry name" value="Thioredoxin_8"/>
    <property type="match status" value="1"/>
</dbReference>
<dbReference type="SUPFAM" id="SSF52833">
    <property type="entry name" value="Thioredoxin-like"/>
    <property type="match status" value="1"/>
</dbReference>